<evidence type="ECO:0000255" key="1">
    <source>
        <dbReference type="HAMAP-Rule" id="MF_01041"/>
    </source>
</evidence>
<sequence>MNKQYSYPLDLSWSTEELASVLSFFNDVEAAYEGKVEAKKLLDSYKGFKAVVPSKSEEKRLGREFETVSGYSLYRAVQAAKEKGEGKISLGK</sequence>
<comment type="similarity">
    <text evidence="1">Belongs to the UPF0223 family.</text>
</comment>
<dbReference type="EMBL" id="CP000921">
    <property type="protein sequence ID" value="ACO22600.1"/>
    <property type="molecule type" value="Genomic_DNA"/>
</dbReference>
<dbReference type="RefSeq" id="WP_001041974.1">
    <property type="nucleotide sequence ID" value="NC_012469.1"/>
</dbReference>
<dbReference type="SMR" id="C1CQV3"/>
<dbReference type="KEGG" id="snt:SPT_0870"/>
<dbReference type="HOGENOM" id="CLU_166693_0_0_9"/>
<dbReference type="Gene3D" id="1.10.220.80">
    <property type="entry name" value="BH2638-like"/>
    <property type="match status" value="1"/>
</dbReference>
<dbReference type="HAMAP" id="MF_01041">
    <property type="entry name" value="UPF0223"/>
    <property type="match status" value="1"/>
</dbReference>
<dbReference type="InterPro" id="IPR023324">
    <property type="entry name" value="BH2638-like_sf"/>
</dbReference>
<dbReference type="InterPro" id="IPR007920">
    <property type="entry name" value="UPF0223"/>
</dbReference>
<dbReference type="NCBIfam" id="NF003353">
    <property type="entry name" value="PRK04387.1"/>
    <property type="match status" value="1"/>
</dbReference>
<dbReference type="Pfam" id="PF05256">
    <property type="entry name" value="UPF0223"/>
    <property type="match status" value="1"/>
</dbReference>
<dbReference type="PIRSF" id="PIRSF037260">
    <property type="entry name" value="UPF0223"/>
    <property type="match status" value="1"/>
</dbReference>
<dbReference type="SUPFAM" id="SSF158504">
    <property type="entry name" value="BH2638-like"/>
    <property type="match status" value="1"/>
</dbReference>
<name>Y870_STRZT</name>
<accession>C1CQV3</accession>
<feature type="chain" id="PRO_1000149551" description="UPF0223 protein SPT_0870">
    <location>
        <begin position="1"/>
        <end position="92"/>
    </location>
</feature>
<reference key="1">
    <citation type="journal article" date="2010" name="Genome Biol.">
        <title>Structure and dynamics of the pan-genome of Streptococcus pneumoniae and closely related species.</title>
        <authorList>
            <person name="Donati C."/>
            <person name="Hiller N.L."/>
            <person name="Tettelin H."/>
            <person name="Muzzi A."/>
            <person name="Croucher N.J."/>
            <person name="Angiuoli S.V."/>
            <person name="Oggioni M."/>
            <person name="Dunning Hotopp J.C."/>
            <person name="Hu F.Z."/>
            <person name="Riley D.R."/>
            <person name="Covacci A."/>
            <person name="Mitchell T.J."/>
            <person name="Bentley S.D."/>
            <person name="Kilian M."/>
            <person name="Ehrlich G.D."/>
            <person name="Rappuoli R."/>
            <person name="Moxon E.R."/>
            <person name="Masignani V."/>
        </authorList>
    </citation>
    <scope>NUCLEOTIDE SEQUENCE [LARGE SCALE GENOMIC DNA]</scope>
    <source>
        <strain>Taiwan19F-14</strain>
    </source>
</reference>
<protein>
    <recommendedName>
        <fullName evidence="1">UPF0223 protein SPT_0870</fullName>
    </recommendedName>
</protein>
<proteinExistence type="inferred from homology"/>
<gene>
    <name type="ordered locus">SPT_0870</name>
</gene>
<organism>
    <name type="scientific">Streptococcus pneumoniae (strain Taiwan19F-14)</name>
    <dbReference type="NCBI Taxonomy" id="487213"/>
    <lineage>
        <taxon>Bacteria</taxon>
        <taxon>Bacillati</taxon>
        <taxon>Bacillota</taxon>
        <taxon>Bacilli</taxon>
        <taxon>Lactobacillales</taxon>
        <taxon>Streptococcaceae</taxon>
        <taxon>Streptococcus</taxon>
    </lineage>
</organism>